<accession>Q7HTB5</accession>
<protein>
    <recommendedName>
        <fullName evidence="1">Maturase K</fullName>
    </recommendedName>
    <alternativeName>
        <fullName evidence="1">Intron maturase</fullName>
    </alternativeName>
</protein>
<geneLocation type="chloroplast"/>
<keyword id="KW-0150">Chloroplast</keyword>
<keyword id="KW-0507">mRNA processing</keyword>
<keyword id="KW-0934">Plastid</keyword>
<keyword id="KW-0694">RNA-binding</keyword>
<keyword id="KW-0819">tRNA processing</keyword>
<feature type="chain" id="PRO_0000143407" description="Maturase K">
    <location>
        <begin position="1"/>
        <end position="504"/>
    </location>
</feature>
<comment type="function">
    <text evidence="1">Usually encoded in the trnK tRNA gene intron. Probably assists in splicing its own and other chloroplast group II introns.</text>
</comment>
<comment type="subcellular location">
    <subcellularLocation>
        <location>Plastid</location>
        <location>Chloroplast</location>
    </subcellularLocation>
</comment>
<comment type="similarity">
    <text evidence="1">Belongs to the intron maturase 2 family. MatK subfamily.</text>
</comment>
<reference key="1">
    <citation type="journal article" date="2003" name="Evolution">
        <title>Cryptic repeated genomic recombination during speciation in Gossypium gossypioides.</title>
        <authorList>
            <person name="Cronn R."/>
            <person name="Small R.L."/>
            <person name="Haselkorn T."/>
            <person name="Wendel J.F."/>
        </authorList>
    </citation>
    <scope>NUCLEOTIDE SEQUENCE [GENOMIC DNA]</scope>
</reference>
<dbReference type="EMBL" id="AF520729">
    <property type="protein sequence ID" value="AAM77357.1"/>
    <property type="molecule type" value="Genomic_DNA"/>
</dbReference>
<dbReference type="GO" id="GO:0009507">
    <property type="term" value="C:chloroplast"/>
    <property type="evidence" value="ECO:0007669"/>
    <property type="project" value="UniProtKB-SubCell"/>
</dbReference>
<dbReference type="GO" id="GO:0003723">
    <property type="term" value="F:RNA binding"/>
    <property type="evidence" value="ECO:0007669"/>
    <property type="project" value="UniProtKB-KW"/>
</dbReference>
<dbReference type="GO" id="GO:0006397">
    <property type="term" value="P:mRNA processing"/>
    <property type="evidence" value="ECO:0007669"/>
    <property type="project" value="UniProtKB-KW"/>
</dbReference>
<dbReference type="GO" id="GO:0008380">
    <property type="term" value="P:RNA splicing"/>
    <property type="evidence" value="ECO:0007669"/>
    <property type="project" value="UniProtKB-UniRule"/>
</dbReference>
<dbReference type="GO" id="GO:0008033">
    <property type="term" value="P:tRNA processing"/>
    <property type="evidence" value="ECO:0007669"/>
    <property type="project" value="UniProtKB-KW"/>
</dbReference>
<dbReference type="HAMAP" id="MF_01390">
    <property type="entry name" value="MatK"/>
    <property type="match status" value="1"/>
</dbReference>
<dbReference type="InterPro" id="IPR024937">
    <property type="entry name" value="Domain_X"/>
</dbReference>
<dbReference type="InterPro" id="IPR002866">
    <property type="entry name" value="Maturase_MatK"/>
</dbReference>
<dbReference type="InterPro" id="IPR024942">
    <property type="entry name" value="Maturase_MatK_N"/>
</dbReference>
<dbReference type="PANTHER" id="PTHR34811">
    <property type="entry name" value="MATURASE K"/>
    <property type="match status" value="1"/>
</dbReference>
<dbReference type="PANTHER" id="PTHR34811:SF1">
    <property type="entry name" value="MATURASE K"/>
    <property type="match status" value="1"/>
</dbReference>
<dbReference type="Pfam" id="PF01348">
    <property type="entry name" value="Intron_maturas2"/>
    <property type="match status" value="1"/>
</dbReference>
<dbReference type="Pfam" id="PF01824">
    <property type="entry name" value="MatK_N"/>
    <property type="match status" value="1"/>
</dbReference>
<gene>
    <name evidence="1" type="primary">matK</name>
</gene>
<evidence type="ECO:0000255" key="1">
    <source>
        <dbReference type="HAMAP-Rule" id="MF_01390"/>
    </source>
</evidence>
<name>MATK_GOSSC</name>
<sequence>MEEFQVYLELNRSRRHDFLYPLIFREYIYALAHEHGLNKSMIFFENQGYGNKFSSLIVKRLILRMDQQNRLISSANDSNQNPVFGHNNNLYSQMIAAGFAVIVEIPFSLRLISYSQGAEAAKSHNFQSIHSIFPFLEDKFSHLNYVLEALIPHPIHLEILVQALRYWVKDASSLHLLRFSLYEYCNLKSFITPKKSISIFNPRLFLFLYNSHTCEYESIFLFLRNQSSHLRSTSSGVFLERIFFYGKIKYLGEVFYNDFQNNLWLFKDPFIHFIRYQGKSILASKDTSLLINKWKYYFVDLWQYYFYLWSQSGRVRINQLSKYSLDFLGYLSSVRLNPSVVRSQMLENSFLIDNAVKTLDTRIPIISIIGSLSKAKFCNTLGHPISKPTWADSPDSDIIDRFVRISRNLSHYHSGSSKKKSLYRIKYILRFSCVKTLARKHKSTVRAFLKKLGSEFLEEFFTETEEEHVFSLIFPRGFFALRKVYRGRIWYLDIICINALVNHS</sequence>
<organism>
    <name type="scientific">Gossypium schwendimanii</name>
    <name type="common">Cotton</name>
    <dbReference type="NCBI Taxonomy" id="34291"/>
    <lineage>
        <taxon>Eukaryota</taxon>
        <taxon>Viridiplantae</taxon>
        <taxon>Streptophyta</taxon>
        <taxon>Embryophyta</taxon>
        <taxon>Tracheophyta</taxon>
        <taxon>Spermatophyta</taxon>
        <taxon>Magnoliopsida</taxon>
        <taxon>eudicotyledons</taxon>
        <taxon>Gunneridae</taxon>
        <taxon>Pentapetalae</taxon>
        <taxon>rosids</taxon>
        <taxon>malvids</taxon>
        <taxon>Malvales</taxon>
        <taxon>Malvaceae</taxon>
        <taxon>Malvoideae</taxon>
        <taxon>Gossypium</taxon>
    </lineage>
</organism>
<proteinExistence type="inferred from homology"/>